<reference key="1">
    <citation type="journal article" date="1997" name="DNA Res.">
        <title>Structural analysis of Arabidopsis thaliana chromosome 5. I. Sequence features of the 1.6 Mb regions covered by twenty physically assigned P1 clones.</title>
        <authorList>
            <person name="Sato S."/>
            <person name="Kotani H."/>
            <person name="Nakamura Y."/>
            <person name="Kaneko T."/>
            <person name="Asamizu E."/>
            <person name="Fukami M."/>
            <person name="Miyajima N."/>
            <person name="Tabata S."/>
        </authorList>
    </citation>
    <scope>NUCLEOTIDE SEQUENCE [LARGE SCALE GENOMIC DNA]</scope>
    <source>
        <strain>cv. Columbia</strain>
    </source>
</reference>
<reference key="2">
    <citation type="journal article" date="2017" name="Plant J.">
        <title>Araport11: a complete reannotation of the Arabidopsis thaliana reference genome.</title>
        <authorList>
            <person name="Cheng C.Y."/>
            <person name="Krishnakumar V."/>
            <person name="Chan A.P."/>
            <person name="Thibaud-Nissen F."/>
            <person name="Schobel S."/>
            <person name="Town C.D."/>
        </authorList>
    </citation>
    <scope>GENOME REANNOTATION</scope>
    <source>
        <strain>cv. Columbia</strain>
    </source>
</reference>
<reference key="3">
    <citation type="journal article" date="2003" name="Science">
        <title>Empirical analysis of transcriptional activity in the Arabidopsis genome.</title>
        <authorList>
            <person name="Yamada K."/>
            <person name="Lim J."/>
            <person name="Dale J.M."/>
            <person name="Chen H."/>
            <person name="Shinn P."/>
            <person name="Palm C.J."/>
            <person name="Southwick A.M."/>
            <person name="Wu H.C."/>
            <person name="Kim C.J."/>
            <person name="Nguyen M."/>
            <person name="Pham P.K."/>
            <person name="Cheuk R.F."/>
            <person name="Karlin-Newmann G."/>
            <person name="Liu S.X."/>
            <person name="Lam B."/>
            <person name="Sakano H."/>
            <person name="Wu T."/>
            <person name="Yu G."/>
            <person name="Miranda M."/>
            <person name="Quach H.L."/>
            <person name="Tripp M."/>
            <person name="Chang C.H."/>
            <person name="Lee J.M."/>
            <person name="Toriumi M.J."/>
            <person name="Chan M.M."/>
            <person name="Tang C.C."/>
            <person name="Onodera C.S."/>
            <person name="Deng J.M."/>
            <person name="Akiyama K."/>
            <person name="Ansari Y."/>
            <person name="Arakawa T."/>
            <person name="Banh J."/>
            <person name="Banno F."/>
            <person name="Bowser L."/>
            <person name="Brooks S.Y."/>
            <person name="Carninci P."/>
            <person name="Chao Q."/>
            <person name="Choy N."/>
            <person name="Enju A."/>
            <person name="Goldsmith A.D."/>
            <person name="Gurjal M."/>
            <person name="Hansen N.F."/>
            <person name="Hayashizaki Y."/>
            <person name="Johnson-Hopson C."/>
            <person name="Hsuan V.W."/>
            <person name="Iida K."/>
            <person name="Karnes M."/>
            <person name="Khan S."/>
            <person name="Koesema E."/>
            <person name="Ishida J."/>
            <person name="Jiang P.X."/>
            <person name="Jones T."/>
            <person name="Kawai J."/>
            <person name="Kamiya A."/>
            <person name="Meyers C."/>
            <person name="Nakajima M."/>
            <person name="Narusaka M."/>
            <person name="Seki M."/>
            <person name="Sakurai T."/>
            <person name="Satou M."/>
            <person name="Tamse R."/>
            <person name="Vaysberg M."/>
            <person name="Wallender E.K."/>
            <person name="Wong C."/>
            <person name="Yamamura Y."/>
            <person name="Yuan S."/>
            <person name="Shinozaki K."/>
            <person name="Davis R.W."/>
            <person name="Theologis A."/>
            <person name="Ecker J.R."/>
        </authorList>
    </citation>
    <scope>NUCLEOTIDE SEQUENCE [LARGE SCALE MRNA]</scope>
    <source>
        <strain>cv. Columbia</strain>
    </source>
</reference>
<reference key="4">
    <citation type="journal article" date="2007" name="Plant J.">
        <title>Identification of a flavin-monooxygenase as the S-oxygenating enzyme in aliphatic glucosinolate biosynthesis in Arabidopsis.</title>
        <authorList>
            <person name="Hansen B.G."/>
            <person name="Kliebenstein D.J."/>
            <person name="Halkier B.A."/>
        </authorList>
    </citation>
    <scope>GENE FAMILY</scope>
    <source>
        <strain>cv. Columbia</strain>
    </source>
</reference>
<feature type="chain" id="PRO_0000401964" description="Flavin-containing monooxygenase FMO GS-OX-like 9">
    <location>
        <begin position="1"/>
        <end position="460"/>
    </location>
</feature>
<feature type="binding site" evidence="2">
    <location>
        <begin position="20"/>
        <end position="25"/>
    </location>
    <ligand>
        <name>FAD</name>
        <dbReference type="ChEBI" id="CHEBI:57692"/>
    </ligand>
</feature>
<feature type="binding site" evidence="2">
    <location>
        <begin position="222"/>
        <end position="227"/>
    </location>
    <ligand>
        <name>NADP(+)</name>
        <dbReference type="ChEBI" id="CHEBI:58349"/>
    </ligand>
</feature>
<accession>Q9FF12</accession>
<evidence type="ECO:0000250" key="1"/>
<evidence type="ECO:0000255" key="2"/>
<evidence type="ECO:0000305" key="3"/>
<name>GSXL9_ARATH</name>
<proteinExistence type="evidence at transcript level"/>
<keyword id="KW-0274">FAD</keyword>
<keyword id="KW-0285">Flavoprotein</keyword>
<keyword id="KW-0503">Monooxygenase</keyword>
<keyword id="KW-0521">NADP</keyword>
<keyword id="KW-0560">Oxidoreductase</keyword>
<keyword id="KW-1185">Reference proteome</keyword>
<sequence length="460" mass="52337">MVTFTSEASRSRSKKVCVIGAGPAGLVSARELRKEGHKVVVLEQNEDVGGQWFYQPNVEEEDPLGRSSGSINGELKVHSSIYSSLRLTSPREIMGYSDFPFLAKKGRDMRRFPGHKELWLYLKDFSEAFGLREMIRFNVRVEFVGEKEEEDDVKKWIVRSREKFSGKVMEEIFDAVVVATGHYSHPRLPSIKGMDSWKRKQIHSHVYRVPDPFRNEVVVVVGNSMSGQDISMELVEVAKEVHLSAKTLDISSGLSKVISKHPNLLIHPQIESLEDDGKVIFVDGSWVVADTILYCTGYSYKFPFLESKGRIEVDDDRVGPLFEHTFPPCLSPSLSFVGIPRKLIGFPFFEAQAKWIAQVLSGKSSLPSPDQMLQSVDEFYRSRDLAGVPKHNTHDIADFTYCDKYADYVGFPHLEDWRKLLCLSALNNSQENLETYRDSWDDHELLQEALQSSHFTNFNS</sequence>
<gene>
    <name type="ordered locus">At5g07800</name>
    <name type="ORF">MXM12.4</name>
</gene>
<protein>
    <recommendedName>
        <fullName>Flavin-containing monooxygenase FMO GS-OX-like 9</fullName>
        <ecNumber>1.8.-.-</ecNumber>
    </recommendedName>
    <alternativeName>
        <fullName>Flavin-monooxygenase glucosinolate S-oxygenase-like 9</fullName>
    </alternativeName>
</protein>
<comment type="function">
    <text evidence="1">Catalyzes the conversion of methylthioalkyl glucosinolates of any chain length into methylsulfinylalkyl glucosinolates.</text>
</comment>
<comment type="cofactor">
    <cofactor evidence="1">
        <name>FAD</name>
        <dbReference type="ChEBI" id="CHEBI:57692"/>
    </cofactor>
</comment>
<comment type="similarity">
    <text evidence="3">Belongs to the FMO family.</text>
</comment>
<comment type="sequence caution" evidence="3">
    <conflict type="frameshift">
        <sequence resource="EMBL" id="BT002806"/>
    </conflict>
</comment>
<dbReference type="EC" id="1.8.-.-"/>
<dbReference type="EMBL" id="AB005249">
    <property type="protein sequence ID" value="BAB09944.1"/>
    <property type="molecule type" value="Genomic_DNA"/>
</dbReference>
<dbReference type="EMBL" id="CP002688">
    <property type="protein sequence ID" value="AED91206.1"/>
    <property type="molecule type" value="Genomic_DNA"/>
</dbReference>
<dbReference type="EMBL" id="BT002806">
    <property type="status" value="NOT_ANNOTATED_CDS"/>
    <property type="molecule type" value="mRNA"/>
</dbReference>
<dbReference type="RefSeq" id="NP_196397.1">
    <property type="nucleotide sequence ID" value="NM_120862.4"/>
</dbReference>
<dbReference type="SMR" id="Q9FF12"/>
<dbReference type="FunCoup" id="Q9FF12">
    <property type="interactions" value="569"/>
</dbReference>
<dbReference type="STRING" id="3702.Q9FF12"/>
<dbReference type="PaxDb" id="3702-AT5G07800.1"/>
<dbReference type="ProteomicsDB" id="247230"/>
<dbReference type="EnsemblPlants" id="AT5G07800.1">
    <property type="protein sequence ID" value="AT5G07800.1"/>
    <property type="gene ID" value="AT5G07800"/>
</dbReference>
<dbReference type="GeneID" id="830673"/>
<dbReference type="Gramene" id="AT5G07800.1">
    <property type="protein sequence ID" value="AT5G07800.1"/>
    <property type="gene ID" value="AT5G07800"/>
</dbReference>
<dbReference type="KEGG" id="ath:AT5G07800"/>
<dbReference type="Araport" id="AT5G07800"/>
<dbReference type="TAIR" id="AT5G07800"/>
<dbReference type="eggNOG" id="KOG1399">
    <property type="taxonomic scope" value="Eukaryota"/>
</dbReference>
<dbReference type="HOGENOM" id="CLU_006909_3_3_1"/>
<dbReference type="InParanoid" id="Q9FF12"/>
<dbReference type="OMA" id="CFEKQSD"/>
<dbReference type="OrthoDB" id="66881at2759"/>
<dbReference type="PhylomeDB" id="Q9FF12"/>
<dbReference type="BioCyc" id="ARA:AT5G07800-MONOMER"/>
<dbReference type="PRO" id="PR:Q9FF12"/>
<dbReference type="Proteomes" id="UP000006548">
    <property type="component" value="Chromosome 5"/>
</dbReference>
<dbReference type="ExpressionAtlas" id="Q9FF12">
    <property type="expression patterns" value="baseline and differential"/>
</dbReference>
<dbReference type="GO" id="GO:0050660">
    <property type="term" value="F:flavin adenine dinucleotide binding"/>
    <property type="evidence" value="ECO:0007669"/>
    <property type="project" value="InterPro"/>
</dbReference>
<dbReference type="GO" id="GO:0004499">
    <property type="term" value="F:N,N-dimethylaniline monooxygenase activity"/>
    <property type="evidence" value="ECO:0007669"/>
    <property type="project" value="InterPro"/>
</dbReference>
<dbReference type="GO" id="GO:0050661">
    <property type="term" value="F:NADP binding"/>
    <property type="evidence" value="ECO:0007669"/>
    <property type="project" value="InterPro"/>
</dbReference>
<dbReference type="FunFam" id="3.50.50.60:FF:000147">
    <property type="entry name" value="Flavin-containing monooxygenase"/>
    <property type="match status" value="1"/>
</dbReference>
<dbReference type="Gene3D" id="3.50.50.60">
    <property type="entry name" value="FAD/NAD(P)-binding domain"/>
    <property type="match status" value="2"/>
</dbReference>
<dbReference type="InterPro" id="IPR036188">
    <property type="entry name" value="FAD/NAD-bd_sf"/>
</dbReference>
<dbReference type="InterPro" id="IPR000960">
    <property type="entry name" value="Flavin_mOase"/>
</dbReference>
<dbReference type="InterPro" id="IPR020946">
    <property type="entry name" value="Flavin_mOase-like"/>
</dbReference>
<dbReference type="InterPro" id="IPR050346">
    <property type="entry name" value="FMO-like"/>
</dbReference>
<dbReference type="PANTHER" id="PTHR23023">
    <property type="entry name" value="DIMETHYLANILINE MONOOXYGENASE"/>
    <property type="match status" value="1"/>
</dbReference>
<dbReference type="Pfam" id="PF00743">
    <property type="entry name" value="FMO-like"/>
    <property type="match status" value="2"/>
</dbReference>
<dbReference type="PIRSF" id="PIRSF000332">
    <property type="entry name" value="FMO"/>
    <property type="match status" value="1"/>
</dbReference>
<dbReference type="PRINTS" id="PR00370">
    <property type="entry name" value="FMOXYGENASE"/>
</dbReference>
<dbReference type="SUPFAM" id="SSF51905">
    <property type="entry name" value="FAD/NAD(P)-binding domain"/>
    <property type="match status" value="2"/>
</dbReference>
<organism>
    <name type="scientific">Arabidopsis thaliana</name>
    <name type="common">Mouse-ear cress</name>
    <dbReference type="NCBI Taxonomy" id="3702"/>
    <lineage>
        <taxon>Eukaryota</taxon>
        <taxon>Viridiplantae</taxon>
        <taxon>Streptophyta</taxon>
        <taxon>Embryophyta</taxon>
        <taxon>Tracheophyta</taxon>
        <taxon>Spermatophyta</taxon>
        <taxon>Magnoliopsida</taxon>
        <taxon>eudicotyledons</taxon>
        <taxon>Gunneridae</taxon>
        <taxon>Pentapetalae</taxon>
        <taxon>rosids</taxon>
        <taxon>malvids</taxon>
        <taxon>Brassicales</taxon>
        <taxon>Brassicaceae</taxon>
        <taxon>Camelineae</taxon>
        <taxon>Arabidopsis</taxon>
    </lineage>
</organism>